<feature type="chain" id="PRO_1000022151" description="Isoleucine--tRNA ligase">
    <location>
        <begin position="1"/>
        <end position="1076"/>
    </location>
</feature>
<feature type="short sequence motif" description="'HIGH' region">
    <location>
        <begin position="47"/>
        <end position="57"/>
    </location>
</feature>
<feature type="short sequence motif" description="'KMSKS' region">
    <location>
        <begin position="591"/>
        <end position="595"/>
    </location>
</feature>
<feature type="binding site" evidence="1">
    <location>
        <position position="594"/>
    </location>
    <ligand>
        <name>ATP</name>
        <dbReference type="ChEBI" id="CHEBI:30616"/>
    </ligand>
</feature>
<comment type="function">
    <text evidence="1">Catalyzes the attachment of isoleucine to tRNA(Ile). As IleRS can inadvertently accommodate and process structurally similar amino acids such as valine, to avoid such errors it has two additional distinct tRNA(Ile)-dependent editing activities. One activity is designated as 'pretransfer' editing and involves the hydrolysis of activated Val-AMP. The other activity is designated 'posttransfer' editing and involves deacylation of mischarged Val-tRNA(Ile).</text>
</comment>
<comment type="catalytic activity">
    <reaction evidence="1">
        <text>tRNA(Ile) + L-isoleucine + ATP = L-isoleucyl-tRNA(Ile) + AMP + diphosphate</text>
        <dbReference type="Rhea" id="RHEA:11060"/>
        <dbReference type="Rhea" id="RHEA-COMP:9666"/>
        <dbReference type="Rhea" id="RHEA-COMP:9695"/>
        <dbReference type="ChEBI" id="CHEBI:30616"/>
        <dbReference type="ChEBI" id="CHEBI:33019"/>
        <dbReference type="ChEBI" id="CHEBI:58045"/>
        <dbReference type="ChEBI" id="CHEBI:78442"/>
        <dbReference type="ChEBI" id="CHEBI:78528"/>
        <dbReference type="ChEBI" id="CHEBI:456215"/>
        <dbReference type="EC" id="6.1.1.5"/>
    </reaction>
</comment>
<comment type="cofactor">
    <cofactor evidence="1">
        <name>Zn(2+)</name>
        <dbReference type="ChEBI" id="CHEBI:29105"/>
    </cofactor>
</comment>
<comment type="subunit">
    <text evidence="1">Monomer.</text>
</comment>
<comment type="subcellular location">
    <subcellularLocation>
        <location evidence="1">Cytoplasm</location>
    </subcellularLocation>
</comment>
<comment type="domain">
    <text evidence="1">IleRS has two distinct active sites: one for aminoacylation and one for editing. The misactivated valine is translocated from the active site to the editing site, which sterically excludes the correctly activated isoleucine. The single editing site contains two valyl binding pockets, one specific for each substrate (Val-AMP or Val-tRNA(Ile)).</text>
</comment>
<comment type="similarity">
    <text evidence="1">Belongs to the class-I aminoacyl-tRNA synthetase family. IleS type 2 subfamily.</text>
</comment>
<gene>
    <name evidence="1" type="primary">ileS</name>
    <name type="ordered locus">Mboo_2269</name>
</gene>
<reference key="1">
    <citation type="journal article" date="2015" name="Microbiology">
        <title>Genome of Methanoregula boonei 6A8 reveals adaptations to oligotrophic peatland environments.</title>
        <authorList>
            <person name="Braeuer S."/>
            <person name="Cadillo-Quiroz H."/>
            <person name="Kyrpides N."/>
            <person name="Woyke T."/>
            <person name="Goodwin L."/>
            <person name="Detter C."/>
            <person name="Podell S."/>
            <person name="Yavitt J.B."/>
            <person name="Zinder S.H."/>
        </authorList>
    </citation>
    <scope>NUCLEOTIDE SEQUENCE [LARGE SCALE GENOMIC DNA]</scope>
    <source>
        <strain>DSM 21154 / JCM 14090 / 6A8</strain>
    </source>
</reference>
<evidence type="ECO:0000255" key="1">
    <source>
        <dbReference type="HAMAP-Rule" id="MF_02003"/>
    </source>
</evidence>
<accession>A7IAM2</accession>
<organism>
    <name type="scientific">Methanoregula boonei (strain DSM 21154 / JCM 14090 / 6A8)</name>
    <dbReference type="NCBI Taxonomy" id="456442"/>
    <lineage>
        <taxon>Archaea</taxon>
        <taxon>Methanobacteriati</taxon>
        <taxon>Methanobacteriota</taxon>
        <taxon>Stenosarchaea group</taxon>
        <taxon>Methanomicrobia</taxon>
        <taxon>Methanomicrobiales</taxon>
        <taxon>Methanoregulaceae</taxon>
        <taxon>Methanoregula</taxon>
    </lineage>
</organism>
<dbReference type="EC" id="6.1.1.5" evidence="1"/>
<dbReference type="EMBL" id="CP000780">
    <property type="protein sequence ID" value="ABS56783.1"/>
    <property type="molecule type" value="Genomic_DNA"/>
</dbReference>
<dbReference type="RefSeq" id="WP_012107843.1">
    <property type="nucleotide sequence ID" value="NC_009712.1"/>
</dbReference>
<dbReference type="SMR" id="A7IAM2"/>
<dbReference type="STRING" id="456442.Mboo_2269"/>
<dbReference type="GeneID" id="5411001"/>
<dbReference type="KEGG" id="mbn:Mboo_2269"/>
<dbReference type="eggNOG" id="arCOG00807">
    <property type="taxonomic scope" value="Archaea"/>
</dbReference>
<dbReference type="HOGENOM" id="CLU_001493_1_1_2"/>
<dbReference type="OrthoDB" id="30823at2157"/>
<dbReference type="Proteomes" id="UP000002408">
    <property type="component" value="Chromosome"/>
</dbReference>
<dbReference type="GO" id="GO:0005737">
    <property type="term" value="C:cytoplasm"/>
    <property type="evidence" value="ECO:0007669"/>
    <property type="project" value="UniProtKB-SubCell"/>
</dbReference>
<dbReference type="GO" id="GO:0002161">
    <property type="term" value="F:aminoacyl-tRNA deacylase activity"/>
    <property type="evidence" value="ECO:0007669"/>
    <property type="project" value="InterPro"/>
</dbReference>
<dbReference type="GO" id="GO:0005524">
    <property type="term" value="F:ATP binding"/>
    <property type="evidence" value="ECO:0007669"/>
    <property type="project" value="UniProtKB-UniRule"/>
</dbReference>
<dbReference type="GO" id="GO:0004822">
    <property type="term" value="F:isoleucine-tRNA ligase activity"/>
    <property type="evidence" value="ECO:0007669"/>
    <property type="project" value="UniProtKB-UniRule"/>
</dbReference>
<dbReference type="GO" id="GO:0000049">
    <property type="term" value="F:tRNA binding"/>
    <property type="evidence" value="ECO:0007669"/>
    <property type="project" value="InterPro"/>
</dbReference>
<dbReference type="GO" id="GO:0008270">
    <property type="term" value="F:zinc ion binding"/>
    <property type="evidence" value="ECO:0007669"/>
    <property type="project" value="UniProtKB-UniRule"/>
</dbReference>
<dbReference type="GO" id="GO:0006428">
    <property type="term" value="P:isoleucyl-tRNA aminoacylation"/>
    <property type="evidence" value="ECO:0007669"/>
    <property type="project" value="UniProtKB-UniRule"/>
</dbReference>
<dbReference type="CDD" id="cd07961">
    <property type="entry name" value="Anticodon_Ia_Ile_ABEc"/>
    <property type="match status" value="1"/>
</dbReference>
<dbReference type="CDD" id="cd00818">
    <property type="entry name" value="IleRS_core"/>
    <property type="match status" value="1"/>
</dbReference>
<dbReference type="FunFam" id="3.40.50.620:FF:000286">
    <property type="entry name" value="Isoleucine--tRNA ligase"/>
    <property type="match status" value="1"/>
</dbReference>
<dbReference type="Gene3D" id="3.40.50.620">
    <property type="entry name" value="HUPs"/>
    <property type="match status" value="2"/>
</dbReference>
<dbReference type="Gene3D" id="1.10.730.10">
    <property type="entry name" value="Isoleucyl-tRNA Synthetase, Domain 1"/>
    <property type="match status" value="1"/>
</dbReference>
<dbReference type="Gene3D" id="3.90.740.10">
    <property type="entry name" value="Valyl/Leucyl/Isoleucyl-tRNA synthetase, editing domain"/>
    <property type="match status" value="1"/>
</dbReference>
<dbReference type="HAMAP" id="MF_02003">
    <property type="entry name" value="Ile_tRNA_synth_type2"/>
    <property type="match status" value="1"/>
</dbReference>
<dbReference type="InterPro" id="IPR001412">
    <property type="entry name" value="aa-tRNA-synth_I_CS"/>
</dbReference>
<dbReference type="InterPro" id="IPR002300">
    <property type="entry name" value="aa-tRNA-synth_Ia"/>
</dbReference>
<dbReference type="InterPro" id="IPR033709">
    <property type="entry name" value="Anticodon_Ile_ABEc"/>
</dbReference>
<dbReference type="InterPro" id="IPR002301">
    <property type="entry name" value="Ile-tRNA-ligase"/>
</dbReference>
<dbReference type="InterPro" id="IPR023586">
    <property type="entry name" value="Ile-tRNA-ligase_type2"/>
</dbReference>
<dbReference type="InterPro" id="IPR013155">
    <property type="entry name" value="M/V/L/I-tRNA-synth_anticd-bd"/>
</dbReference>
<dbReference type="InterPro" id="IPR014729">
    <property type="entry name" value="Rossmann-like_a/b/a_fold"/>
</dbReference>
<dbReference type="InterPro" id="IPR009080">
    <property type="entry name" value="tRNAsynth_Ia_anticodon-bd"/>
</dbReference>
<dbReference type="InterPro" id="IPR009008">
    <property type="entry name" value="Val/Leu/Ile-tRNA-synth_edit"/>
</dbReference>
<dbReference type="NCBIfam" id="TIGR00392">
    <property type="entry name" value="ileS"/>
    <property type="match status" value="1"/>
</dbReference>
<dbReference type="PANTHER" id="PTHR42780:SF1">
    <property type="entry name" value="ISOLEUCINE--TRNA LIGASE, CYTOPLASMIC"/>
    <property type="match status" value="1"/>
</dbReference>
<dbReference type="PANTHER" id="PTHR42780">
    <property type="entry name" value="SOLEUCYL-TRNA SYNTHETASE"/>
    <property type="match status" value="1"/>
</dbReference>
<dbReference type="Pfam" id="PF08264">
    <property type="entry name" value="Anticodon_1"/>
    <property type="match status" value="1"/>
</dbReference>
<dbReference type="Pfam" id="PF19302">
    <property type="entry name" value="DUF5915"/>
    <property type="match status" value="1"/>
</dbReference>
<dbReference type="Pfam" id="PF00133">
    <property type="entry name" value="tRNA-synt_1"/>
    <property type="match status" value="1"/>
</dbReference>
<dbReference type="PRINTS" id="PR00984">
    <property type="entry name" value="TRNASYNTHILE"/>
</dbReference>
<dbReference type="SUPFAM" id="SSF47323">
    <property type="entry name" value="Anticodon-binding domain of a subclass of class I aminoacyl-tRNA synthetases"/>
    <property type="match status" value="1"/>
</dbReference>
<dbReference type="SUPFAM" id="SSF52374">
    <property type="entry name" value="Nucleotidylyl transferase"/>
    <property type="match status" value="1"/>
</dbReference>
<dbReference type="SUPFAM" id="SSF50677">
    <property type="entry name" value="ValRS/IleRS/LeuRS editing domain"/>
    <property type="match status" value="1"/>
</dbReference>
<dbReference type="PROSITE" id="PS00178">
    <property type="entry name" value="AA_TRNA_LIGASE_I"/>
    <property type="match status" value="1"/>
</dbReference>
<proteinExistence type="inferred from homology"/>
<keyword id="KW-0030">Aminoacyl-tRNA synthetase</keyword>
<keyword id="KW-0067">ATP-binding</keyword>
<keyword id="KW-0963">Cytoplasm</keyword>
<keyword id="KW-0436">Ligase</keyword>
<keyword id="KW-0479">Metal-binding</keyword>
<keyword id="KW-0547">Nucleotide-binding</keyword>
<keyword id="KW-0648">Protein biosynthesis</keyword>
<keyword id="KW-1185">Reference proteome</keyword>
<keyword id="KW-0862">Zinc</keyword>
<sequence>MKEVTANFSAKDIEREVQEYWRTHDTYKAVKEQHSAGRAFFFVDGPPYTTGQIHLGTAWNKIIKDSILRYHRMNGRNVIDRAGYDMHGLPIEVKVEQKLGFASKKDIETFGIEKFINECREFAIKNKELMDAQFENLGIWMDFKNAYQTIKPWYVEAAWWTLAKAQEKGMLERGYRVVNWCPRCETAIADAEVEYWDETDPSVFVKFPIRGKVSESLVIWTTTPWTLPANVAVAVGKEFVYARVHAEKNGREEYLWVAEDLVKSVLKKGRYQKFETLETKKGAELIGWEYDSPLMDVVPIQKEIAHRVVAADFVAMENTGMVHIAPGHGWDDYVLGTKEKLAIVCPVDGAGKFRPETGIFAGKFVRDANGEVLDALGERLLATEKITHRYGHCWRCKTPIIFRATSQWFLKASEMRDLMLSEVKKVTWYPEWAGSARFYDWIKEARDWCVSRQRYWGIPIPVWICDKCDKYRVIGTIAELEKASGQKVPDPHRPFVDQVTIPCECGGTMKRVGDIFDVWFDSAVASWATVGFPAKTDEFEKLWPADFITEGQDQTRGWFYSQLGASTIAFGKAPYKSVCMHGFALDAEGRKMSKSLGNVVAPEEVIAKVGVDVLRLYVLSSSAPWDDLKFNWDGIATVNRTMNILWNVYRFPMPYMILDRFEPEAKSGHWDGSFVRSHIRELPDEDRWIVSRINTVAGIVDASTKECQLHRATREILNFILEDLSRWYVQLVRPRMWLEGESEQKIFAYETIYYVMRRLVDLMAPFAPHITEEIYSNLRCKNDPGSVHMLDWQACDDALTNRELEHAMELVRSFDDAVQNARQAGKRKLRWPVDEVVIVTAKPEVKDAVARLNEVCMDRANARKVTVVIGRWDRIGWHAEPVMKALGKGFGKNSFAVKGLIEAADGNAIKAAVDAGQKFQLKIEEGKISKPDDLKIGTDYEQDVVEIGIEHVRFTEKLPTDIFSAPMEDGTVYVDVALTPDLEAEGYAREIIRRIQEMRRQLDLAVEDFIMVDVAVADKRICELVGASWKPGIADEVRAKTLSLHHSAEPAGSSHQLAKDWDVEGIAMTIGISKVA</sequence>
<protein>
    <recommendedName>
        <fullName evidence="1">Isoleucine--tRNA ligase</fullName>
        <ecNumber evidence="1">6.1.1.5</ecNumber>
    </recommendedName>
    <alternativeName>
        <fullName evidence="1">Isoleucyl-tRNA synthetase</fullName>
        <shortName evidence="1">IleRS</shortName>
    </alternativeName>
</protein>
<name>SYI_METB6</name>